<feature type="chain" id="PRO_0000078662" description="Endoplasmic reticulum chaperone BiP">
    <location>
        <begin position="1"/>
        <end position="15" status="greater than"/>
    </location>
</feature>
<feature type="non-terminal residue">
    <location>
        <position position="15"/>
    </location>
</feature>
<sequence length="15" mass="1647">EEEDKKEDVGTVVGI</sequence>
<keyword id="KW-0067">ATP-binding</keyword>
<keyword id="KW-0143">Chaperone</keyword>
<keyword id="KW-0963">Cytoplasm</keyword>
<keyword id="KW-0903">Direct protein sequencing</keyword>
<keyword id="KW-0256">Endoplasmic reticulum</keyword>
<keyword id="KW-0378">Hydrolase</keyword>
<keyword id="KW-0547">Nucleotide-binding</keyword>
<keyword id="KW-1185">Reference proteome</keyword>
<organism>
    <name type="scientific">Equus caballus</name>
    <name type="common">Horse</name>
    <dbReference type="NCBI Taxonomy" id="9796"/>
    <lineage>
        <taxon>Eukaryota</taxon>
        <taxon>Metazoa</taxon>
        <taxon>Chordata</taxon>
        <taxon>Craniata</taxon>
        <taxon>Vertebrata</taxon>
        <taxon>Euteleostomi</taxon>
        <taxon>Mammalia</taxon>
        <taxon>Eutheria</taxon>
        <taxon>Laurasiatheria</taxon>
        <taxon>Perissodactyla</taxon>
        <taxon>Equidae</taxon>
        <taxon>Equus</taxon>
    </lineage>
</organism>
<reference key="1">
    <citation type="journal article" date="1990" name="Biochem. Biophys. Res. Commun.">
        <title>Isolation and identification of a polypeptide in the Hsp 70 family that binds substance P.</title>
        <authorList>
            <person name="Oblas B."/>
            <person name="Boyd N.D."/>
            <person name="Luber-Narod J."/>
            <person name="Reyes V.E."/>
            <person name="Leeman S.E."/>
        </authorList>
    </citation>
    <scope>PROTEIN SEQUENCE</scope>
</reference>
<gene>
    <name evidence="2" type="primary">HSPA5</name>
    <name evidence="2" type="synonym">GRP78</name>
</gene>
<proteinExistence type="evidence at protein level"/>
<dbReference type="EC" id="3.6.4.10" evidence="2"/>
<dbReference type="InParanoid" id="P16392"/>
<dbReference type="Proteomes" id="UP000002281">
    <property type="component" value="Unplaced"/>
</dbReference>
<dbReference type="GO" id="GO:0009986">
    <property type="term" value="C:cell surface"/>
    <property type="evidence" value="ECO:0007669"/>
    <property type="project" value="UniProtKB-SubCell"/>
</dbReference>
<dbReference type="GO" id="GO:0005737">
    <property type="term" value="C:cytoplasm"/>
    <property type="evidence" value="ECO:0000250"/>
    <property type="project" value="UniProtKB"/>
</dbReference>
<dbReference type="GO" id="GO:0005829">
    <property type="term" value="C:cytosol"/>
    <property type="evidence" value="ECO:0000250"/>
    <property type="project" value="UniProtKB"/>
</dbReference>
<dbReference type="GO" id="GO:0005788">
    <property type="term" value="C:endoplasmic reticulum lumen"/>
    <property type="evidence" value="ECO:0007669"/>
    <property type="project" value="UniProtKB-SubCell"/>
</dbReference>
<dbReference type="GO" id="GO:0043231">
    <property type="term" value="C:intracellular membrane-bounded organelle"/>
    <property type="evidence" value="ECO:0000250"/>
    <property type="project" value="UniProtKB"/>
</dbReference>
<dbReference type="GO" id="GO:0042470">
    <property type="term" value="C:melanosome"/>
    <property type="evidence" value="ECO:0007669"/>
    <property type="project" value="UniProtKB-SubCell"/>
</dbReference>
<dbReference type="GO" id="GO:0005739">
    <property type="term" value="C:mitochondrion"/>
    <property type="evidence" value="ECO:0000250"/>
    <property type="project" value="UniProtKB"/>
</dbReference>
<dbReference type="GO" id="GO:0005524">
    <property type="term" value="F:ATP binding"/>
    <property type="evidence" value="ECO:0007669"/>
    <property type="project" value="UniProtKB-KW"/>
</dbReference>
<dbReference type="GO" id="GO:0016887">
    <property type="term" value="F:ATP hydrolysis activity"/>
    <property type="evidence" value="ECO:0000250"/>
    <property type="project" value="UniProtKB"/>
</dbReference>
<dbReference type="GO" id="GO:0035437">
    <property type="term" value="P:maintenance of protein localization in endoplasmic reticulum"/>
    <property type="evidence" value="ECO:0000250"/>
    <property type="project" value="UniProtKB"/>
</dbReference>
<dbReference type="GO" id="GO:1903895">
    <property type="term" value="P:negative regulation of IRE1-mediated unfolded protein response"/>
    <property type="evidence" value="ECO:0000250"/>
    <property type="project" value="UniProtKB"/>
</dbReference>
<dbReference type="GO" id="GO:0031333">
    <property type="term" value="P:negative regulation of protein-containing complex assembly"/>
    <property type="evidence" value="ECO:0000250"/>
    <property type="project" value="UniProtKB"/>
</dbReference>
<dbReference type="GO" id="GO:0030335">
    <property type="term" value="P:positive regulation of cell migration"/>
    <property type="evidence" value="ECO:0000250"/>
    <property type="project" value="UniProtKB"/>
</dbReference>
<dbReference type="GO" id="GO:0031204">
    <property type="term" value="P:post-translational protein targeting to membrane, translocation"/>
    <property type="evidence" value="ECO:0000250"/>
    <property type="project" value="UniProtKB"/>
</dbReference>
<comment type="function">
    <text evidence="1 2 3">Endoplasmic reticulum chaperone that plays a key role in protein folding and quality control in the endoplasmic reticulum lumen (By similarity). Involved in the correct folding of proteins and degradation of misfolded proteins via its interaction with DNAJC10/ERdj5, probably to facilitate the release of DNAJC10/ERdj5 from its substrate (By similarity). Acts as a key repressor of the EIF2AK3/PERK and ERN1/IRE1-mediated unfolded protein response (UPR). In the unstressed endoplasmic reticulum, recruited by DNAJB9/ERdj4 to the luminal region of ERN1/IRE1, leading to disrupt the dimerization of ERN1/IRE1, thereby inactivating ERN1/IRE1. Also binds and inactivates EIF2AK3/PERK in unstressed cells. Accumulation of misfolded protein in the endoplasmic reticulum causes release of HSPA5/BiP from ERN1/IRE1 and EIF2AK3/PERK, allowing their homodimerization and subsequent activation (By similarity). Plays an auxiliary role in post-translational transport of small presecretory proteins across endoplasmic reticulum (ER). May function as an allosteric modulator for SEC61 channel-forming translocon complex, likely cooperating with SEC62 to enable the productive insertion of these precursors into SEC61 channel. Appears to specifically regulate translocation of precursors having inhibitory residues in their mature region that weaken channel gating. May also play a role in apoptosis and cell proliferation (By similarity).</text>
</comment>
<comment type="catalytic activity">
    <reaction evidence="1">
        <text>ATP + H2O = ADP + phosphate + H(+)</text>
        <dbReference type="Rhea" id="RHEA:13065"/>
        <dbReference type="ChEBI" id="CHEBI:15377"/>
        <dbReference type="ChEBI" id="CHEBI:15378"/>
        <dbReference type="ChEBI" id="CHEBI:30616"/>
        <dbReference type="ChEBI" id="CHEBI:43474"/>
        <dbReference type="ChEBI" id="CHEBI:456216"/>
        <dbReference type="EC" id="3.6.4.10"/>
    </reaction>
</comment>
<comment type="activity regulation">
    <text evidence="1 2">The chaperone activity is regulated by ATP-induced allosteric coupling of the nucleotide-binding (NBD) and substrate-binding (SBD) domains (By similarity). In the ADP-bound and nucleotide-free (apo) states, the two domains have little interaction (By similarity). In contrast, in the ATP-bound state the two domains are tightly coupled, which results in drastically accelerated kinetics in both binding and release of polypeptide substrates (By similarity). J domain-containing co-chaperones (DNAJB9/ERdj4 or DNAJC10/ERdj5) stimulate the ATPase activity and are required for efficient substrate recognition by HSPA5/BiP. Homooligomerization inactivates participating HSPA5/BiP protomers and probably act as reservoirs to store HSPA5/BiP molecules when they are not needed by the cell (By similarity).</text>
</comment>
<comment type="subunit">
    <text evidence="1 2 3">Monomer and homooligomer; homooligomerization via the interdomain linker inactivates the chaperone activity and acts as a storage of HSPA5/BiP molecules (By similarity). Interacts with DNAJC1 (via J domain). Component of an EIF2 complex at least composed of CELF1/CUGBP1, CALR, CALR3, EIF2S1, EIF2S2, HSP90B1 and HSPA5. Part of a large chaperone multiprotein complex comprising DNAJB11, HSP90B1, HSPA5, HYOU, PDIA2, PDIA4, PDIA6, PPIB, SDF2L1, UGGT1 and very small amounts of ERP29, but not, or at very low levels, CALR nor CANX (By similarity). Interacts with TMEM132A and TRIM21 (By similarity). May form a complex with ERLEC1, OS9, SEL1L and SYVN1 (By similarity). Interacts with DNAJC10. Interacts with DNAJB9/ERdj4; leading to recruit HSPA5/BiP to ERN1/IRE1 (By similarity). Interacts with ERN1/IRE1 (via luminal domain); the interaction takes place following interaction with DNAJB9/ERdj4 and leads to inactivate ERN1/IRE1, the interaction also competitively inhibits ERN1 interaction with MANF (By similarity). Interacts directly with MANF (via SAP domain); the interaction inhibits ATP binding to HSPA5/BiP and subsequent nucleotide exchange (By similarity). Interacts with EIF2AK3/PERK (via luminal domain)K; interaction leads to inactivate EIF2AK3/PERK (By similarity). Interacts with MX1 (By similarity). Interacts with METTL23 (By similarity). Interacts with CEMIP; the interaction induces calcium leakage from the endoplasmic reticulum and cell migration (By similarity). Interacts with PCSK4 form; the interaction takes place in the endoplasmic reticulum (By similarity). Interacts with CIPC (By similarity). Interacts with CCDC88B (via C-terminus); the interaction opposes ERN1-mediated JNK activation, protecting against apoptosis (By similarity). Interacts with INPP5K; necessary for INPP5K localization at the endoplasmic reticulum (By similarity). Interacts with MANF; the interaction is direct (By similarity). Interacts with LOXL2; leading to activate the ERN1/IRE1-XBP1 pathway of the unfolded protein response (By similarity). Interacts with CLU under stressed condition; interaction increases CLU protein stability; facilitates its retrotranslocation and redistribution to the mitochondria; cooperatively suppress stress-induced apoptosis by stabilizing mitochondrial membrane integrity (By similarity). Interacts with CCDC47 (By similarity). Interacts with CLN3 (By similarity). Interacts with ELAPOR1; may regulate the function of HSPA5 in apoptosis and cell proliferation. Interacts with CASP7 (By similarity). Interacts with ILDR2; the interaction stabilizes ILDR2 expression (By similarity). Interacts with ADAM7 (By similarity).</text>
</comment>
<comment type="subcellular location">
    <subcellularLocation>
        <location evidence="2">Endoplasmic reticulum lumen</location>
    </subcellularLocation>
    <subcellularLocation>
        <location evidence="2">Melanosome</location>
    </subcellularLocation>
    <subcellularLocation>
        <location evidence="3">Cytoplasm</location>
    </subcellularLocation>
    <subcellularLocation>
        <location>Cell surface</location>
    </subcellularLocation>
    <text evidence="2">Identified by mass spectrometry in melanosome fractions from stage I to stage IV (By similarity). Localizes to the cell surface in epithelial cells; high levels of free iron promotes cell surface localization (By similarity).</text>
</comment>
<comment type="domain">
    <text evidence="1">The interdomain linker regulates the chaperone activity by mediating the formation of homooligomers. Homooligomers are formed by engagement of the interdomain linker of one HSPA5/BiP molecule as a typical substrate of an adjacent HSPA5/BiP molecule. HSPA5/BiP oligomerization inactivates participating HSPA5/BiP protomers. HSPA5/BiP oligomers probably act as reservoirs to store HSPA5/BiP molecules when they are not needed by the cell. When the levels of unfolded proteins rise, cells can rapidly break up these oligomers to make active monomers.</text>
</comment>
<comment type="PTM">
    <text evidence="1">In unstressed cells, AMPylation at Thr-518 by FICD inactivates the chaperome activity: AMPylated form is locked in a relatively inert state and only weakly stimulated by J domain-containing proteins. In response to endoplasmic reticulum stress, de-AMPylation by the same protein, FICD, restores the chaperone activity.</text>
</comment>
<comment type="similarity">
    <text evidence="4">Belongs to the heat shock protein 70 family.</text>
</comment>
<name>BIP_HORSE</name>
<evidence type="ECO:0000250" key="1">
    <source>
        <dbReference type="UniProtKB" id="G3I8R9"/>
    </source>
</evidence>
<evidence type="ECO:0000250" key="2">
    <source>
        <dbReference type="UniProtKB" id="P11021"/>
    </source>
</evidence>
<evidence type="ECO:0000250" key="3">
    <source>
        <dbReference type="UniProtKB" id="P20029"/>
    </source>
</evidence>
<evidence type="ECO:0000305" key="4"/>
<accession>P16392</accession>
<protein>
    <recommendedName>
        <fullName evidence="2">Endoplasmic reticulum chaperone BiP</fullName>
        <ecNumber evidence="2">3.6.4.10</ecNumber>
    </recommendedName>
    <alternativeName>
        <fullName evidence="2">78 kDa glucose-regulated protein</fullName>
        <shortName evidence="2">GRP-78</shortName>
    </alternativeName>
    <alternativeName>
        <fullName evidence="2">Binding-immunoglobulin protein</fullName>
        <shortName evidence="2">BiP</shortName>
    </alternativeName>
    <alternativeName>
        <fullName evidence="2">Heat shock protein 70 family protein 5</fullName>
        <shortName evidence="2">HSP70 family protein 5</shortName>
    </alternativeName>
    <alternativeName>
        <fullName evidence="2">Heat shock protein family A member 5</fullName>
    </alternativeName>
    <alternativeName>
        <fullName evidence="2">Immunoglobulin heavy chain-binding protein</fullName>
    </alternativeName>
</protein>